<proteinExistence type="inferred from homology"/>
<organism>
    <name type="scientific">Kluyveromyces lactis (strain ATCC 8585 / CBS 2359 / DSM 70799 / NBRC 1267 / NRRL Y-1140 / WM37)</name>
    <name type="common">Yeast</name>
    <name type="synonym">Candida sphaerica</name>
    <dbReference type="NCBI Taxonomy" id="284590"/>
    <lineage>
        <taxon>Eukaryota</taxon>
        <taxon>Fungi</taxon>
        <taxon>Dikarya</taxon>
        <taxon>Ascomycota</taxon>
        <taxon>Saccharomycotina</taxon>
        <taxon>Saccharomycetes</taxon>
        <taxon>Saccharomycetales</taxon>
        <taxon>Saccharomycetaceae</taxon>
        <taxon>Kluyveromyces</taxon>
    </lineage>
</organism>
<dbReference type="EMBL" id="CR382123">
    <property type="protein sequence ID" value="CAH01504.1"/>
    <property type="molecule type" value="Genomic_DNA"/>
</dbReference>
<dbReference type="RefSeq" id="XP_452653.1">
    <property type="nucleotide sequence ID" value="XM_452653.1"/>
</dbReference>
<dbReference type="SMR" id="Q6CTT6"/>
<dbReference type="FunCoup" id="Q6CTT6">
    <property type="interactions" value="894"/>
</dbReference>
<dbReference type="STRING" id="284590.Q6CTT6"/>
<dbReference type="PaxDb" id="284590-Q6CTT6"/>
<dbReference type="KEGG" id="kla:KLLA0_C10186g"/>
<dbReference type="eggNOG" id="KOG3169">
    <property type="taxonomic scope" value="Eukaryota"/>
</dbReference>
<dbReference type="HOGENOM" id="CLU_077754_0_0_1"/>
<dbReference type="InParanoid" id="Q6CTT6"/>
<dbReference type="OMA" id="MQRQFSQ"/>
<dbReference type="Proteomes" id="UP000000598">
    <property type="component" value="Chromosome C"/>
</dbReference>
<dbReference type="GO" id="GO:0016592">
    <property type="term" value="C:mediator complex"/>
    <property type="evidence" value="ECO:0007669"/>
    <property type="project" value="InterPro"/>
</dbReference>
<dbReference type="GO" id="GO:0003712">
    <property type="term" value="F:transcription coregulator activity"/>
    <property type="evidence" value="ECO:0007669"/>
    <property type="project" value="InterPro"/>
</dbReference>
<dbReference type="GO" id="GO:0006357">
    <property type="term" value="P:regulation of transcription by RNA polymerase II"/>
    <property type="evidence" value="ECO:0007669"/>
    <property type="project" value="InterPro"/>
</dbReference>
<dbReference type="Gene3D" id="3.10.450.580">
    <property type="entry name" value="Mediator complex, subunit Med6"/>
    <property type="match status" value="1"/>
</dbReference>
<dbReference type="InterPro" id="IPR007018">
    <property type="entry name" value="Mediator_Med6"/>
</dbReference>
<dbReference type="InterPro" id="IPR016612">
    <property type="entry name" value="Mediator_Med6_fun"/>
</dbReference>
<dbReference type="InterPro" id="IPR038566">
    <property type="entry name" value="Mediator_Med6_sf"/>
</dbReference>
<dbReference type="PANTHER" id="PTHR13104">
    <property type="entry name" value="MED-6-RELATED"/>
    <property type="match status" value="1"/>
</dbReference>
<dbReference type="Pfam" id="PF04934">
    <property type="entry name" value="Med6"/>
    <property type="match status" value="1"/>
</dbReference>
<dbReference type="PIRSF" id="PIRSF013286">
    <property type="entry name" value="MED6_fungi"/>
    <property type="match status" value="1"/>
</dbReference>
<evidence type="ECO:0000250" key="1"/>
<evidence type="ECO:0000256" key="2">
    <source>
        <dbReference type="SAM" id="MobiDB-lite"/>
    </source>
</evidence>
<evidence type="ECO:0000305" key="3"/>
<comment type="function">
    <text evidence="1">Component of the Mediator complex, a coactivator involved in the regulated transcription of nearly all RNA polymerase II-dependent genes. Mediator functions as a bridge to convey information from gene-specific regulatory proteins to the basal RNA polymerase II transcription machinery. Mediator is recruited to promoters by direct interactions with regulatory proteins and serves as a scaffold for the assembly of a functional preinitiation complex with RNA polymerase II and the general transcription factors (By similarity).</text>
</comment>
<comment type="subunit">
    <text evidence="1">Component of the Mediator complex.</text>
</comment>
<comment type="subcellular location">
    <subcellularLocation>
        <location evidence="1">Nucleus</location>
    </subcellularLocation>
</comment>
<comment type="similarity">
    <text evidence="3">Belongs to the Mediator complex subunit 6 family.</text>
</comment>
<accession>Q6CTT6</accession>
<protein>
    <recommendedName>
        <fullName>Mediator of RNA polymerase II transcription subunit 6</fullName>
    </recommendedName>
    <alternativeName>
        <fullName>Mediator complex subunit 6</fullName>
    </alternativeName>
</protein>
<keyword id="KW-0010">Activator</keyword>
<keyword id="KW-0539">Nucleus</keyword>
<keyword id="KW-1185">Reference proteome</keyword>
<keyword id="KW-0804">Transcription</keyword>
<keyword id="KW-0805">Transcription regulation</keyword>
<name>MED6_KLULA</name>
<reference key="1">
    <citation type="journal article" date="2004" name="Nature">
        <title>Genome evolution in yeasts.</title>
        <authorList>
            <person name="Dujon B."/>
            <person name="Sherman D."/>
            <person name="Fischer G."/>
            <person name="Durrens P."/>
            <person name="Casaregola S."/>
            <person name="Lafontaine I."/>
            <person name="de Montigny J."/>
            <person name="Marck C."/>
            <person name="Neuveglise C."/>
            <person name="Talla E."/>
            <person name="Goffard N."/>
            <person name="Frangeul L."/>
            <person name="Aigle M."/>
            <person name="Anthouard V."/>
            <person name="Babour A."/>
            <person name="Barbe V."/>
            <person name="Barnay S."/>
            <person name="Blanchin S."/>
            <person name="Beckerich J.-M."/>
            <person name="Beyne E."/>
            <person name="Bleykasten C."/>
            <person name="Boisrame A."/>
            <person name="Boyer J."/>
            <person name="Cattolico L."/>
            <person name="Confanioleri F."/>
            <person name="de Daruvar A."/>
            <person name="Despons L."/>
            <person name="Fabre E."/>
            <person name="Fairhead C."/>
            <person name="Ferry-Dumazet H."/>
            <person name="Groppi A."/>
            <person name="Hantraye F."/>
            <person name="Hennequin C."/>
            <person name="Jauniaux N."/>
            <person name="Joyet P."/>
            <person name="Kachouri R."/>
            <person name="Kerrest A."/>
            <person name="Koszul R."/>
            <person name="Lemaire M."/>
            <person name="Lesur I."/>
            <person name="Ma L."/>
            <person name="Muller H."/>
            <person name="Nicaud J.-M."/>
            <person name="Nikolski M."/>
            <person name="Oztas S."/>
            <person name="Ozier-Kalogeropoulos O."/>
            <person name="Pellenz S."/>
            <person name="Potier S."/>
            <person name="Richard G.-F."/>
            <person name="Straub M.-L."/>
            <person name="Suleau A."/>
            <person name="Swennen D."/>
            <person name="Tekaia F."/>
            <person name="Wesolowski-Louvel M."/>
            <person name="Westhof E."/>
            <person name="Wirth B."/>
            <person name="Zeniou-Meyer M."/>
            <person name="Zivanovic Y."/>
            <person name="Bolotin-Fukuhara M."/>
            <person name="Thierry A."/>
            <person name="Bouchier C."/>
            <person name="Caudron B."/>
            <person name="Scarpelli C."/>
            <person name="Gaillardin C."/>
            <person name="Weissenbach J."/>
            <person name="Wincker P."/>
            <person name="Souciet J.-L."/>
        </authorList>
    </citation>
    <scope>NUCLEOTIDE SEQUENCE [LARGE SCALE GENOMIC DNA]</scope>
    <source>
        <strain>ATCC 8585 / CBS 2359 / DSM 70799 / NBRC 1267 / NRRL Y-1140 / WM37</strain>
    </source>
</reference>
<sequence length="268" mass="29472">MSLPPLDELQWKSPEWIQTFGLHTDNVLDYFSESPFFDKTSNNQVVKMQQQFSQQSQVPGSMPLGSSSGIGAAAGAGTVSPSDRSLIWERYPVHAMLEKELMKMKGIEYILVLVREPDLWIIRKQQRDGPTKTTTLRDYYVIGSAVYQSPTVYKIIQNRLLSTNYHLSHSLSQLNKLVEFHPAQGASFLRPEDPLCSSVAAATTSGSTASHTVASSVSVPETGPINAETSGATAAATSIDPDRRQDSFNTEIMDKLMATSIKANPVYI</sequence>
<feature type="chain" id="PRO_0000303060" description="Mediator of RNA polymerase II transcription subunit 6">
    <location>
        <begin position="1"/>
        <end position="268"/>
    </location>
</feature>
<feature type="region of interest" description="Disordered" evidence="2">
    <location>
        <begin position="220"/>
        <end position="245"/>
    </location>
</feature>
<feature type="compositionally biased region" description="Low complexity" evidence="2">
    <location>
        <begin position="227"/>
        <end position="238"/>
    </location>
</feature>
<gene>
    <name type="primary">MED6</name>
    <name type="ordered locus">KLLA0C10186g</name>
</gene>